<feature type="chain" id="PRO_0000219316" description="Cyclic nucleotide-gated channel alpha-3">
    <location>
        <begin position="1"/>
        <end position="706"/>
    </location>
</feature>
<feature type="topological domain" description="Cytoplasmic" evidence="8">
    <location>
        <begin position="1"/>
        <end position="189"/>
    </location>
</feature>
<feature type="transmembrane region" description="Helical; Name=S1" evidence="1">
    <location>
        <begin position="190"/>
        <end position="211"/>
    </location>
</feature>
<feature type="topological domain" description="Extracellular" evidence="8">
    <location>
        <begin position="212"/>
        <end position="217"/>
    </location>
</feature>
<feature type="transmembrane region" description="Helical; Name=S2" evidence="1">
    <location>
        <begin position="218"/>
        <end position="238"/>
    </location>
</feature>
<feature type="topological domain" description="Cytoplasmic" evidence="8">
    <location>
        <begin position="239"/>
        <end position="265"/>
    </location>
</feature>
<feature type="transmembrane region" description="Helical; Name=S3" evidence="1">
    <location>
        <begin position="266"/>
        <end position="285"/>
    </location>
</feature>
<feature type="topological domain" description="Extracellular" evidence="8">
    <location>
        <begin position="286"/>
        <end position="289"/>
    </location>
</feature>
<feature type="transmembrane region" description="Helical; Name=S4" evidence="1">
    <location>
        <begin position="290"/>
        <end position="307"/>
    </location>
</feature>
<feature type="topological domain" description="Cytoplasmic" evidence="8">
    <location>
        <begin position="308"/>
        <end position="317"/>
    </location>
</feature>
<feature type="transmembrane region" description="Helical; Name=S5" evidence="1">
    <location>
        <begin position="318"/>
        <end position="340"/>
    </location>
</feature>
<feature type="topological domain" description="Extracellular" evidence="8">
    <location>
        <begin position="341"/>
        <end position="366"/>
    </location>
</feature>
<feature type="transmembrane region" description="Helical; Name=P-helix" evidence="1">
    <location>
        <begin position="367"/>
        <end position="397"/>
    </location>
</feature>
<feature type="transmembrane region" description="Helical; Name=S6" evidence="1">
    <location>
        <begin position="398"/>
        <end position="422"/>
    </location>
</feature>
<feature type="topological domain" description="Cytoplasmic" evidence="8">
    <location>
        <begin position="423"/>
        <end position="706"/>
    </location>
</feature>
<feature type="region of interest" description="Disordered" evidence="4">
    <location>
        <begin position="113"/>
        <end position="177"/>
    </location>
</feature>
<feature type="region of interest" description="Ion conduction pathway" evidence="1">
    <location>
        <begin position="317"/>
        <end position="425"/>
    </location>
</feature>
<feature type="region of interest" description="Selectivity filter" evidence="1">
    <location>
        <begin position="384"/>
        <end position="387"/>
    </location>
</feature>
<feature type="region of interest" description="C-linker" evidence="1">
    <location>
        <begin position="427"/>
        <end position="504"/>
    </location>
</feature>
<feature type="region of interest" description="Cyclic nucleotide-binding domain" evidence="1">
    <location>
        <begin position="507"/>
        <end position="627"/>
    </location>
</feature>
<feature type="region of interest" description="Disordered" evidence="4">
    <location>
        <begin position="685"/>
        <end position="706"/>
    </location>
</feature>
<feature type="coiled-coil region" evidence="1">
    <location>
        <begin position="645"/>
        <end position="688"/>
    </location>
</feature>
<feature type="compositionally biased region" description="Basic and acidic residues" evidence="4">
    <location>
        <begin position="147"/>
        <end position="177"/>
    </location>
</feature>
<feature type="binding site" evidence="1">
    <location>
        <position position="567"/>
    </location>
    <ligand>
        <name>3',5'-cyclic GMP</name>
        <dbReference type="ChEBI" id="CHEBI:57746"/>
    </ligand>
</feature>
<feature type="binding site" evidence="1">
    <location>
        <position position="568"/>
    </location>
    <ligand>
        <name>3',5'-cyclic GMP</name>
        <dbReference type="ChEBI" id="CHEBI:57746"/>
    </ligand>
</feature>
<feature type="binding site" evidence="1">
    <location>
        <position position="570"/>
    </location>
    <ligand>
        <name>3',5'-cyclic GMP</name>
        <dbReference type="ChEBI" id="CHEBI:57746"/>
    </ligand>
</feature>
<feature type="binding site" evidence="1">
    <location>
        <position position="583"/>
    </location>
    <ligand>
        <name>3',5'-cyclic GMP</name>
        <dbReference type="ChEBI" id="CHEBI:57746"/>
    </ligand>
</feature>
<feature type="binding site" evidence="1">
    <location>
        <position position="584"/>
    </location>
    <ligand>
        <name>3',5'-cyclic GMP</name>
        <dbReference type="ChEBI" id="CHEBI:57746"/>
    </ligand>
</feature>
<feature type="binding site" evidence="1">
    <location>
        <position position="628"/>
    </location>
    <ligand>
        <name>3',5'-cyclic GMP</name>
        <dbReference type="ChEBI" id="CHEBI:57746"/>
    </ligand>
</feature>
<feature type="site" description="Central gate" evidence="1">
    <location>
        <position position="411"/>
    </location>
</feature>
<feature type="site" description="Central gate" evidence="1">
    <location>
        <position position="415"/>
    </location>
</feature>
<feature type="glycosylation site" description="N-linked (GalNAc...) asparagine" evidence="1">
    <location>
        <position position="358"/>
    </location>
</feature>
<protein>
    <recommendedName>
        <fullName>Cyclic nucleotide-gated channel alpha-3</fullName>
        <shortName>CNG channel alpha-3</shortName>
        <shortName>CNG-3</shortName>
        <shortName evidence="7">CNG3</shortName>
    </recommendedName>
    <alternativeName>
        <fullName evidence="1">Cone photoreceptor cGMP-gated channel subunit alpha-3</fullName>
    </alternativeName>
    <alternativeName>
        <fullName evidence="2">Gustatory cyclic nucleotide-gated cation channel</fullName>
        <shortName evidence="2">CNGgust</shortName>
    </alternativeName>
</protein>
<organism>
    <name type="scientific">Bos taurus</name>
    <name type="common">Bovine</name>
    <dbReference type="NCBI Taxonomy" id="9913"/>
    <lineage>
        <taxon>Eukaryota</taxon>
        <taxon>Metazoa</taxon>
        <taxon>Chordata</taxon>
        <taxon>Craniata</taxon>
        <taxon>Vertebrata</taxon>
        <taxon>Euteleostomi</taxon>
        <taxon>Mammalia</taxon>
        <taxon>Eutheria</taxon>
        <taxon>Laurasiatheria</taxon>
        <taxon>Artiodactyla</taxon>
        <taxon>Ruminantia</taxon>
        <taxon>Pecora</taxon>
        <taxon>Bovidae</taxon>
        <taxon>Bovinae</taxon>
        <taxon>Bos</taxon>
    </lineage>
</organism>
<proteinExistence type="evidence at protein level"/>
<evidence type="ECO:0000250" key="1">
    <source>
        <dbReference type="UniProtKB" id="Q16281"/>
    </source>
</evidence>
<evidence type="ECO:0000250" key="2">
    <source>
        <dbReference type="UniProtKB" id="Q9ER33"/>
    </source>
</evidence>
<evidence type="ECO:0000255" key="3"/>
<evidence type="ECO:0000256" key="4">
    <source>
        <dbReference type="SAM" id="MobiDB-lite"/>
    </source>
</evidence>
<evidence type="ECO:0000269" key="5">
    <source>
    </source>
</evidence>
<evidence type="ECO:0000269" key="6">
    <source>
    </source>
</evidence>
<evidence type="ECO:0000303" key="7">
    <source>
    </source>
</evidence>
<evidence type="ECO:0000305" key="8"/>
<accession>Q29441</accession>
<gene>
    <name evidence="7" type="primary">CNGA3</name>
    <name type="synonym">CNCG3</name>
</gene>
<sequence length="706" mass="81132">MAKISTQYSHPTRTHPSVRTMDRDLDCIENGLSRTHLPCEETSSELQEGIAMETRGLAESRQSSFTSQGPTRLSRLIISLRAWSARHLHQEDQRPDSFLERFRGAELQEVSSRESHVQFNVGSQEPPDRGRSAWPLARNNTNTCNNSEKDDKAKKEEKEKKEEKKENPKKEEKKKDSVVMDPSSNMYYHWLTVIAVPVFYNWCLLVCRACFDELQSEHLMLWLVLDYSADILYGMDMLVRARTGFLEQGLMVMDASRLWKHYTQTLHFKLDVLSLVPTDLAYFKLGMNYPELRFNRLLKLARLFEFFDRTETRTNYPNMFRIGNLVLYILIIIHWNACIYFAISKFIGFGTDSWVYPNVSNPEYGRLSRKYIYSLYWSTLTLTTIGETPPPVKDEEYLFVVIDFLVGVLIFATIVGNVGSMISNMNASRAEFQAKIDSIKQYMQFRKVTKDLETRVIRWFDYLWANKKTVDEKEVLKSLPDKLKAEIAINVHLDTLRKVRIFQDCEAGLLVELVLKLRPAVFSPGDYICKKGDIGREMYIIKEGKLAVVAEDGITQFVVLGDGSYFGEISILNIKGSKSGNRRTANIRSIGYSDLFCLSKDDLMEALTEYPEAKKALEEKGRQILMKDNLIDEELAKAGADPKDIEEKVEHLETSLDSLQTRFARLLAEYNATQMKVKQRLSQLESQVKMGLPPDGDAPQTEASQP</sequence>
<dbReference type="EMBL" id="X89600">
    <property type="protein sequence ID" value="CAA61759.1"/>
    <property type="molecule type" value="mRNA"/>
</dbReference>
<dbReference type="EMBL" id="X76485">
    <property type="protein sequence ID" value="CAA54023.1"/>
    <property type="molecule type" value="mRNA"/>
</dbReference>
<dbReference type="PIR" id="A55251">
    <property type="entry name" value="A55251"/>
</dbReference>
<dbReference type="RefSeq" id="NP_776704.1">
    <property type="nucleotide sequence ID" value="NM_174279.2"/>
</dbReference>
<dbReference type="SMR" id="Q29441"/>
<dbReference type="FunCoup" id="Q29441">
    <property type="interactions" value="27"/>
</dbReference>
<dbReference type="STRING" id="9913.ENSBTAP00000062580"/>
<dbReference type="GlyGen" id="Q29441">
    <property type="glycosylation" value="1 site"/>
</dbReference>
<dbReference type="PaxDb" id="9913-ENSBTAP00000052464"/>
<dbReference type="GeneID" id="281701"/>
<dbReference type="KEGG" id="bta:281701"/>
<dbReference type="CTD" id="1261"/>
<dbReference type="eggNOG" id="KOG0500">
    <property type="taxonomic scope" value="Eukaryota"/>
</dbReference>
<dbReference type="HOGENOM" id="CLU_005746_12_0_1"/>
<dbReference type="InParanoid" id="Q29441"/>
<dbReference type="OrthoDB" id="421226at2759"/>
<dbReference type="TreeFam" id="TF319048"/>
<dbReference type="Proteomes" id="UP000009136">
    <property type="component" value="Unplaced"/>
</dbReference>
<dbReference type="GO" id="GO:0120199">
    <property type="term" value="C:cone photoreceptor outer segment"/>
    <property type="evidence" value="ECO:0000314"/>
    <property type="project" value="UniProtKB"/>
</dbReference>
<dbReference type="GO" id="GO:0017071">
    <property type="term" value="C:intracellular cyclic nucleotide activated cation channel complex"/>
    <property type="evidence" value="ECO:0000318"/>
    <property type="project" value="GO_Central"/>
</dbReference>
<dbReference type="GO" id="GO:0005886">
    <property type="term" value="C:plasma membrane"/>
    <property type="evidence" value="ECO:0000318"/>
    <property type="project" value="GO_Central"/>
</dbReference>
<dbReference type="GO" id="GO:0005262">
    <property type="term" value="F:calcium channel activity"/>
    <property type="evidence" value="ECO:0007669"/>
    <property type="project" value="UniProtKB-KW"/>
</dbReference>
<dbReference type="GO" id="GO:0030553">
    <property type="term" value="F:cGMP binding"/>
    <property type="evidence" value="ECO:0000318"/>
    <property type="project" value="GO_Central"/>
</dbReference>
<dbReference type="GO" id="GO:0005222">
    <property type="term" value="F:intracellularly cAMP-activated cation channel activity"/>
    <property type="evidence" value="ECO:0000314"/>
    <property type="project" value="UniProtKB"/>
</dbReference>
<dbReference type="GO" id="GO:0005223">
    <property type="term" value="F:intracellularly cGMP-activated cation channel activity"/>
    <property type="evidence" value="ECO:0000314"/>
    <property type="project" value="UniProtKB"/>
</dbReference>
<dbReference type="GO" id="GO:0044877">
    <property type="term" value="F:protein-containing complex binding"/>
    <property type="evidence" value="ECO:0000318"/>
    <property type="project" value="GO_Central"/>
</dbReference>
<dbReference type="GO" id="GO:0005272">
    <property type="term" value="F:sodium channel activity"/>
    <property type="evidence" value="ECO:0007669"/>
    <property type="project" value="UniProtKB-KW"/>
</dbReference>
<dbReference type="GO" id="GO:0006816">
    <property type="term" value="P:calcium ion transport"/>
    <property type="evidence" value="ECO:0000314"/>
    <property type="project" value="UniProtKB"/>
</dbReference>
<dbReference type="GO" id="GO:0098655">
    <property type="term" value="P:monoatomic cation transmembrane transport"/>
    <property type="evidence" value="ECO:0000318"/>
    <property type="project" value="GO_Central"/>
</dbReference>
<dbReference type="GO" id="GO:0006813">
    <property type="term" value="P:potassium ion transport"/>
    <property type="evidence" value="ECO:0000314"/>
    <property type="project" value="UniProtKB"/>
</dbReference>
<dbReference type="GO" id="GO:0006814">
    <property type="term" value="P:sodium ion transport"/>
    <property type="evidence" value="ECO:0000314"/>
    <property type="project" value="UniProtKB"/>
</dbReference>
<dbReference type="GO" id="GO:0007601">
    <property type="term" value="P:visual perception"/>
    <property type="evidence" value="ECO:0007669"/>
    <property type="project" value="UniProtKB-KW"/>
</dbReference>
<dbReference type="CDD" id="cd00038">
    <property type="entry name" value="CAP_ED"/>
    <property type="match status" value="1"/>
</dbReference>
<dbReference type="FunFam" id="2.60.120.10:FF:000002">
    <property type="entry name" value="Cyclic nucleotide gated channel alpha 1a"/>
    <property type="match status" value="1"/>
</dbReference>
<dbReference type="FunFam" id="1.10.287.630:FF:000001">
    <property type="entry name" value="Cyclic nucleotide-gated channel alpha 3"/>
    <property type="match status" value="1"/>
</dbReference>
<dbReference type="FunFam" id="1.10.287.70:FF:000030">
    <property type="entry name" value="Cyclic nucleotide-gated channel alpha 3"/>
    <property type="match status" value="1"/>
</dbReference>
<dbReference type="FunFam" id="1.20.5.300:FF:000002">
    <property type="entry name" value="Cyclic nucleotide-gated channel alpha 3"/>
    <property type="match status" value="1"/>
</dbReference>
<dbReference type="Gene3D" id="1.10.287.70">
    <property type="match status" value="1"/>
</dbReference>
<dbReference type="Gene3D" id="1.20.5.300">
    <property type="match status" value="1"/>
</dbReference>
<dbReference type="Gene3D" id="1.10.287.630">
    <property type="entry name" value="Helix hairpin bin"/>
    <property type="match status" value="1"/>
</dbReference>
<dbReference type="Gene3D" id="2.60.120.10">
    <property type="entry name" value="Jelly Rolls"/>
    <property type="match status" value="1"/>
</dbReference>
<dbReference type="InterPro" id="IPR032406">
    <property type="entry name" value="CLZ_dom"/>
</dbReference>
<dbReference type="InterPro" id="IPR050866">
    <property type="entry name" value="CNG_cation_channel"/>
</dbReference>
<dbReference type="InterPro" id="IPR018488">
    <property type="entry name" value="cNMP-bd_CS"/>
</dbReference>
<dbReference type="InterPro" id="IPR000595">
    <property type="entry name" value="cNMP-bd_dom"/>
</dbReference>
<dbReference type="InterPro" id="IPR018490">
    <property type="entry name" value="cNMP-bd_dom_sf"/>
</dbReference>
<dbReference type="InterPro" id="IPR005821">
    <property type="entry name" value="Ion_trans_dom"/>
</dbReference>
<dbReference type="InterPro" id="IPR014710">
    <property type="entry name" value="RmlC-like_jellyroll"/>
</dbReference>
<dbReference type="PANTHER" id="PTHR45638:SF6">
    <property type="entry name" value="CYCLIC NUCLEOTIDE-GATED CATION CHANNEL ALPHA-3"/>
    <property type="match status" value="1"/>
</dbReference>
<dbReference type="PANTHER" id="PTHR45638">
    <property type="entry name" value="CYCLIC NUCLEOTIDE-GATED CATION CHANNEL SUBUNIT A"/>
    <property type="match status" value="1"/>
</dbReference>
<dbReference type="Pfam" id="PF16526">
    <property type="entry name" value="CLZ"/>
    <property type="match status" value="1"/>
</dbReference>
<dbReference type="Pfam" id="PF00027">
    <property type="entry name" value="cNMP_binding"/>
    <property type="match status" value="1"/>
</dbReference>
<dbReference type="Pfam" id="PF00520">
    <property type="entry name" value="Ion_trans"/>
    <property type="match status" value="1"/>
</dbReference>
<dbReference type="SMART" id="SM00100">
    <property type="entry name" value="cNMP"/>
    <property type="match status" value="1"/>
</dbReference>
<dbReference type="SUPFAM" id="SSF51206">
    <property type="entry name" value="cAMP-binding domain-like"/>
    <property type="match status" value="1"/>
</dbReference>
<dbReference type="SUPFAM" id="SSF81324">
    <property type="entry name" value="Voltage-gated potassium channels"/>
    <property type="match status" value="1"/>
</dbReference>
<dbReference type="PROSITE" id="PS00888">
    <property type="entry name" value="CNMP_BINDING_1"/>
    <property type="match status" value="1"/>
</dbReference>
<dbReference type="PROSITE" id="PS00889">
    <property type="entry name" value="CNMP_BINDING_2"/>
    <property type="match status" value="1"/>
</dbReference>
<dbReference type="PROSITE" id="PS50042">
    <property type="entry name" value="CNMP_BINDING_3"/>
    <property type="match status" value="1"/>
</dbReference>
<keyword id="KW-0106">Calcium</keyword>
<keyword id="KW-0107">Calcium channel</keyword>
<keyword id="KW-0109">Calcium transport</keyword>
<keyword id="KW-1003">Cell membrane</keyword>
<keyword id="KW-0140">cGMP</keyword>
<keyword id="KW-0142">cGMP-binding</keyword>
<keyword id="KW-0175">Coiled coil</keyword>
<keyword id="KW-0325">Glycoprotein</keyword>
<keyword id="KW-0407">Ion channel</keyword>
<keyword id="KW-0406">Ion transport</keyword>
<keyword id="KW-1071">Ligand-gated ion channel</keyword>
<keyword id="KW-0472">Membrane</keyword>
<keyword id="KW-0547">Nucleotide-binding</keyword>
<keyword id="KW-1185">Reference proteome</keyword>
<keyword id="KW-0716">Sensory transduction</keyword>
<keyword id="KW-0915">Sodium</keyword>
<keyword id="KW-0894">Sodium channel</keyword>
<keyword id="KW-0739">Sodium transport</keyword>
<keyword id="KW-0812">Transmembrane</keyword>
<keyword id="KW-1133">Transmembrane helix</keyword>
<keyword id="KW-0813">Transport</keyword>
<keyword id="KW-0844">Vision</keyword>
<reference key="1">
    <citation type="journal article" date="1994" name="Nature">
        <title>Cloning and functional expression of a cyclic-nucleotide-gated channel from mammalian sperm.</title>
        <authorList>
            <person name="Weyand I."/>
            <person name="Godde M."/>
            <person name="Frings S."/>
            <person name="Weiner J."/>
            <person name="Mueller F."/>
            <person name="Altenhofen W."/>
            <person name="Hatt H."/>
            <person name="Kaupp U.B."/>
        </authorList>
    </citation>
    <scope>NUCLEOTIDE SEQUENCE [MRNA]</scope>
    <scope>FUNCTION</scope>
    <scope>TRANSPORTER ACTIVITY</scope>
    <scope>ACTIVITY REGULATION</scope>
    <scope>TISSUE SPECIFICITY</scope>
    <source>
        <tissue>Testis</tissue>
    </source>
</reference>
<reference key="2">
    <citation type="journal article" date="1994" name="Proc. Natl. Acad. Sci. U.S.A.">
        <title>Another member of the cyclic nucleotide-gated channel family, expressed in testis, kidney, and heart.</title>
        <authorList>
            <person name="Biel M."/>
            <person name="Zong X."/>
            <person name="Distler M."/>
            <person name="Bosse E."/>
            <person name="Klugbauer N."/>
            <person name="Murakami M."/>
            <person name="Flockerzi V."/>
            <person name="Hofmann F."/>
        </authorList>
    </citation>
    <scope>NUCLEOTIDE SEQUENCE [MRNA]</scope>
    <scope>FUNCTION</scope>
    <scope>TRANSPORTER ACTIVITY</scope>
    <scope>ACTIVITY REGULATION</scope>
    <scope>TISSUE SPECIFICITY</scope>
    <source>
        <tissue>Kidney</tissue>
    </source>
</reference>
<reference key="3">
    <citation type="journal article" date="2001" name="Science">
        <title>Nomenclature for ion channel subunits.</title>
        <authorList>
            <person name="Bradley J."/>
            <person name="Frings S."/>
            <person name="Yau K.W."/>
            <person name="Reed R."/>
        </authorList>
    </citation>
    <scope>NOMENCLATURE</scope>
</reference>
<name>CNGA3_BOVIN</name>
<comment type="function">
    <text evidence="1 2 5 6">Pore-forming subunit of the cone cyclic nucleotide-gated channel. Mediates cone photoresponses at bright light converting transient changes in intracellular cGMP levels into electrical signals. In the dark, cGMP levels are high and keep the channel open enabling a steady inward current carried by Na(+) and Ca(2+) ions that leads to membrane depolarization and neurotransmitter release from synaptic terminals. Upon photon absorption cGMP levels decline leading to channel closure and membrane hyperpolarization that ultimately slows neurotransmitter release and signals the presence of light, the end point of the phototransduction cascade (By similarity). Pore-forming subunit of the gustatory cyclic nucleotide-gated channel. In the taste buds, may sense oral extracellular pH and conduct ion currents that modulate the excitability of taste cells (By similarity). Conducts cGMP- and cAMP-gated ion currents, with permeability for monovalent and divalent cations (By similarity) (PubMed:7512693, PubMed:8170936).</text>
</comment>
<comment type="catalytic activity">
    <reaction evidence="5 6">
        <text>Ca(2+)(in) = Ca(2+)(out)</text>
        <dbReference type="Rhea" id="RHEA:29671"/>
        <dbReference type="ChEBI" id="CHEBI:29108"/>
    </reaction>
</comment>
<comment type="catalytic activity">
    <reaction evidence="5 6">
        <text>Na(+)(in) = Na(+)(out)</text>
        <dbReference type="Rhea" id="RHEA:34963"/>
        <dbReference type="ChEBI" id="CHEBI:29101"/>
    </reaction>
</comment>
<comment type="catalytic activity">
    <reaction evidence="5 6">
        <text>K(+)(in) = K(+)(out)</text>
        <dbReference type="Rhea" id="RHEA:29463"/>
        <dbReference type="ChEBI" id="CHEBI:29103"/>
    </reaction>
</comment>
<comment type="catalytic activity">
    <reaction evidence="5 6">
        <text>NH4(+)(in) = NH4(+)(out)</text>
        <dbReference type="Rhea" id="RHEA:28747"/>
        <dbReference type="ChEBI" id="CHEBI:28938"/>
    </reaction>
</comment>
<comment type="catalytic activity">
    <reaction evidence="5 6">
        <text>Rb(+)(in) = Rb(+)(out)</text>
        <dbReference type="Rhea" id="RHEA:78547"/>
        <dbReference type="ChEBI" id="CHEBI:49847"/>
    </reaction>
</comment>
<comment type="catalytic activity">
    <reaction evidence="5 6">
        <text>Li(+)(in) = Li(+)(out)</text>
        <dbReference type="Rhea" id="RHEA:78551"/>
        <dbReference type="ChEBI" id="CHEBI:49713"/>
    </reaction>
</comment>
<comment type="catalytic activity">
    <reaction evidence="5 6">
        <text>Cs(+)(in) = Cs(+)(out)</text>
        <dbReference type="Rhea" id="RHEA:78555"/>
        <dbReference type="ChEBI" id="CHEBI:49547"/>
    </reaction>
</comment>
<comment type="activity regulation">
    <text evidence="5 6">Ca(2+) influx is inhibited by extracellular Mg(2+) ions.</text>
</comment>
<comment type="subunit">
    <text evidence="1">Forms heterotetrameric channels composed of CNGA3 and CNGB3 subunits with 3:1 stoichiometry.</text>
</comment>
<comment type="subcellular location">
    <subcellularLocation>
        <location evidence="1">Cell membrane</location>
        <topology evidence="3">Multi-pass membrane protein</topology>
    </subcellularLocation>
</comment>
<comment type="tissue specificity">
    <text evidence="5 6">Testis, kidney, retinal cone (at protein level) and heart.</text>
</comment>
<comment type="domain">
    <text evidence="1">The C-terminal coiled-coil domain mediates homotrimerization of CNGA subunits.</text>
</comment>
<comment type="domain">
    <text evidence="1">The cyclic nucleotide-binding domain (CNBD) comprises three helices and a beta-roll of eight beta-strands from CNGA3 and CNGB3 subunits. Upon cNMP binding transmits the conformational changes to the C-linker domain of the S6 helix to open the ion conduction pathway.</text>
</comment>
<comment type="domain">
    <text evidence="1">The ion conduction pathway consists of S5, S6 and pore helices from CNGA3 and CNGB3 subunits. It contains a central hydrophobic gate that opens upon cNMP binding.</text>
</comment>
<comment type="similarity">
    <text evidence="8">Belongs to the cyclic nucleotide-gated cation channel (TC 1.A.1.5) family. CNGA3 subfamily.</text>
</comment>